<protein>
    <recommendedName>
        <fullName>Double-strand break repair protein MRE11</fullName>
        <shortName>AtMre11</shortName>
    </recommendedName>
</protein>
<dbReference type="EMBL" id="AJ243822">
    <property type="protein sequence ID" value="CAB50793.1"/>
    <property type="molecule type" value="mRNA"/>
</dbReference>
<dbReference type="EMBL" id="AB010695">
    <property type="protein sequence ID" value="BAB10749.1"/>
    <property type="molecule type" value="Genomic_DNA"/>
</dbReference>
<dbReference type="EMBL" id="CP002688">
    <property type="protein sequence ID" value="AED96476.1"/>
    <property type="molecule type" value="Genomic_DNA"/>
</dbReference>
<dbReference type="PIR" id="T52564">
    <property type="entry name" value="T52564"/>
</dbReference>
<dbReference type="RefSeq" id="NP_200237.1">
    <property type="nucleotide sequence ID" value="NM_124806.2"/>
</dbReference>
<dbReference type="SMR" id="Q9XGM2"/>
<dbReference type="BioGRID" id="20758">
    <property type="interactions" value="19"/>
</dbReference>
<dbReference type="FunCoup" id="Q9XGM2">
    <property type="interactions" value="3653"/>
</dbReference>
<dbReference type="STRING" id="3702.Q9XGM2"/>
<dbReference type="iPTMnet" id="Q9XGM2"/>
<dbReference type="PaxDb" id="3702-AT5G54260.1"/>
<dbReference type="ProteomicsDB" id="239077"/>
<dbReference type="EnsemblPlants" id="AT5G54260.1">
    <property type="protein sequence ID" value="AT5G54260.1"/>
    <property type="gene ID" value="AT5G54260"/>
</dbReference>
<dbReference type="GeneID" id="835514"/>
<dbReference type="Gramene" id="AT5G54260.1">
    <property type="protein sequence ID" value="AT5G54260.1"/>
    <property type="gene ID" value="AT5G54260"/>
</dbReference>
<dbReference type="KEGG" id="ath:AT5G54260"/>
<dbReference type="Araport" id="AT5G54260"/>
<dbReference type="TAIR" id="AT5G54260">
    <property type="gene designation" value="MRE11"/>
</dbReference>
<dbReference type="eggNOG" id="KOG2310">
    <property type="taxonomic scope" value="Eukaryota"/>
</dbReference>
<dbReference type="HOGENOM" id="CLU_009535_3_2_1"/>
<dbReference type="InParanoid" id="Q9XGM2"/>
<dbReference type="OMA" id="ESCMFNA"/>
<dbReference type="PhylomeDB" id="Q9XGM2"/>
<dbReference type="PRO" id="PR:Q9XGM2"/>
<dbReference type="Proteomes" id="UP000006548">
    <property type="component" value="Chromosome 5"/>
</dbReference>
<dbReference type="ExpressionAtlas" id="Q9XGM2">
    <property type="expression patterns" value="baseline and differential"/>
</dbReference>
<dbReference type="GO" id="GO:0000785">
    <property type="term" value="C:chromatin"/>
    <property type="evidence" value="ECO:0000314"/>
    <property type="project" value="TAIR"/>
</dbReference>
<dbReference type="GO" id="GO:0000791">
    <property type="term" value="C:euchromatin"/>
    <property type="evidence" value="ECO:0000314"/>
    <property type="project" value="TAIR"/>
</dbReference>
<dbReference type="GO" id="GO:0030870">
    <property type="term" value="C:Mre11 complex"/>
    <property type="evidence" value="ECO:0007669"/>
    <property type="project" value="InterPro"/>
</dbReference>
<dbReference type="GO" id="GO:0000795">
    <property type="term" value="C:synaptonemal complex"/>
    <property type="evidence" value="ECO:0000314"/>
    <property type="project" value="TAIR"/>
</dbReference>
<dbReference type="GO" id="GO:0008296">
    <property type="term" value="F:3'-5'-DNA exonuclease activity"/>
    <property type="evidence" value="ECO:0007669"/>
    <property type="project" value="InterPro"/>
</dbReference>
<dbReference type="GO" id="GO:0004520">
    <property type="term" value="F:DNA endonuclease activity"/>
    <property type="evidence" value="ECO:0007669"/>
    <property type="project" value="InterPro"/>
</dbReference>
<dbReference type="GO" id="GO:0030145">
    <property type="term" value="F:manganese ion binding"/>
    <property type="evidence" value="ECO:0007669"/>
    <property type="project" value="InterPro"/>
</dbReference>
<dbReference type="GO" id="GO:0006302">
    <property type="term" value="P:double-strand break repair"/>
    <property type="evidence" value="ECO:0007669"/>
    <property type="project" value="InterPro"/>
</dbReference>
<dbReference type="GO" id="GO:0051321">
    <property type="term" value="P:meiotic cell cycle"/>
    <property type="evidence" value="ECO:0007669"/>
    <property type="project" value="UniProtKB-KW"/>
</dbReference>
<dbReference type="CDD" id="cd00840">
    <property type="entry name" value="MPP_Mre11_N"/>
    <property type="match status" value="1"/>
</dbReference>
<dbReference type="FunFam" id="3.30.110.110:FF:000002">
    <property type="entry name" value="Double-strand break repair protein"/>
    <property type="match status" value="1"/>
</dbReference>
<dbReference type="FunFam" id="3.60.21.10:FF:000019">
    <property type="entry name" value="Double-strand break repair protein"/>
    <property type="match status" value="1"/>
</dbReference>
<dbReference type="Gene3D" id="3.60.21.10">
    <property type="match status" value="1"/>
</dbReference>
<dbReference type="Gene3D" id="3.30.110.110">
    <property type="entry name" value="Mre11, capping domain"/>
    <property type="match status" value="1"/>
</dbReference>
<dbReference type="InterPro" id="IPR004843">
    <property type="entry name" value="Calcineurin-like_PHP_ApaH"/>
</dbReference>
<dbReference type="InterPro" id="IPR029052">
    <property type="entry name" value="Metallo-depent_PP-like"/>
</dbReference>
<dbReference type="InterPro" id="IPR003701">
    <property type="entry name" value="Mre11"/>
</dbReference>
<dbReference type="InterPro" id="IPR038487">
    <property type="entry name" value="Mre11_capping_dom"/>
</dbReference>
<dbReference type="InterPro" id="IPR007281">
    <property type="entry name" value="Mre11_DNA-bd"/>
</dbReference>
<dbReference type="InterPro" id="IPR041796">
    <property type="entry name" value="Mre11_N"/>
</dbReference>
<dbReference type="NCBIfam" id="TIGR00583">
    <property type="entry name" value="mre11"/>
    <property type="match status" value="1"/>
</dbReference>
<dbReference type="PANTHER" id="PTHR10139">
    <property type="entry name" value="DOUBLE-STRAND BREAK REPAIR PROTEIN MRE11"/>
    <property type="match status" value="1"/>
</dbReference>
<dbReference type="PANTHER" id="PTHR10139:SF1">
    <property type="entry name" value="DOUBLE-STRAND BREAK REPAIR PROTEIN MRE11"/>
    <property type="match status" value="1"/>
</dbReference>
<dbReference type="Pfam" id="PF00149">
    <property type="entry name" value="Metallophos"/>
    <property type="match status" value="1"/>
</dbReference>
<dbReference type="Pfam" id="PF04152">
    <property type="entry name" value="Mre11_DNA_bind"/>
    <property type="match status" value="1"/>
</dbReference>
<dbReference type="PIRSF" id="PIRSF000882">
    <property type="entry name" value="DSB_repair_MRE11"/>
    <property type="match status" value="1"/>
</dbReference>
<dbReference type="SMART" id="SM01347">
    <property type="entry name" value="Mre11_DNA_bind"/>
    <property type="match status" value="1"/>
</dbReference>
<dbReference type="SUPFAM" id="SSF56300">
    <property type="entry name" value="Metallo-dependent phosphatases"/>
    <property type="match status" value="1"/>
</dbReference>
<keyword id="KW-0158">Chromosome</keyword>
<keyword id="KW-0227">DNA damage</keyword>
<keyword id="KW-0234">DNA repair</keyword>
<keyword id="KW-0255">Endonuclease</keyword>
<keyword id="KW-0269">Exonuclease</keyword>
<keyword id="KW-0378">Hydrolase</keyword>
<keyword id="KW-0464">Manganese</keyword>
<keyword id="KW-0469">Meiosis</keyword>
<keyword id="KW-0479">Metal-binding</keyword>
<keyword id="KW-0540">Nuclease</keyword>
<keyword id="KW-0539">Nucleus</keyword>
<keyword id="KW-1185">Reference proteome</keyword>
<feature type="chain" id="PRO_0000138679" description="Double-strand break repair protein MRE11">
    <location>
        <begin position="1"/>
        <end position="720"/>
    </location>
</feature>
<feature type="region of interest" description="Disordered" evidence="3">
    <location>
        <begin position="503"/>
        <end position="720"/>
    </location>
</feature>
<feature type="compositionally biased region" description="Polar residues" evidence="3">
    <location>
        <begin position="508"/>
        <end position="537"/>
    </location>
</feature>
<feature type="compositionally biased region" description="Basic residues" evidence="3">
    <location>
        <begin position="567"/>
        <end position="579"/>
    </location>
</feature>
<feature type="compositionally biased region" description="Low complexity" evidence="3">
    <location>
        <begin position="596"/>
        <end position="615"/>
    </location>
</feature>
<feature type="compositionally biased region" description="Acidic residues" evidence="3">
    <location>
        <begin position="618"/>
        <end position="633"/>
    </location>
</feature>
<feature type="compositionally biased region" description="Basic residues" evidence="3">
    <location>
        <begin position="650"/>
        <end position="664"/>
    </location>
</feature>
<feature type="compositionally biased region" description="Acidic residues" evidence="3">
    <location>
        <begin position="690"/>
        <end position="699"/>
    </location>
</feature>
<feature type="active site" description="Proton donor" evidence="2">
    <location>
        <position position="125"/>
    </location>
</feature>
<feature type="binding site" evidence="2">
    <location>
        <position position="17"/>
    </location>
    <ligand>
        <name>Mn(2+)</name>
        <dbReference type="ChEBI" id="CHEBI:29035"/>
        <label>1</label>
    </ligand>
</feature>
<feature type="binding site" evidence="2">
    <location>
        <position position="19"/>
    </location>
    <ligand>
        <name>Mn(2+)</name>
        <dbReference type="ChEBI" id="CHEBI:29035"/>
        <label>1</label>
    </ligand>
</feature>
<feature type="binding site" evidence="2">
    <location>
        <position position="57"/>
    </location>
    <ligand>
        <name>Mn(2+)</name>
        <dbReference type="ChEBI" id="CHEBI:29035"/>
        <label>1</label>
    </ligand>
</feature>
<feature type="binding site" evidence="2">
    <location>
        <position position="57"/>
    </location>
    <ligand>
        <name>Mn(2+)</name>
        <dbReference type="ChEBI" id="CHEBI:29035"/>
        <label>2</label>
    </ligand>
</feature>
<feature type="binding site" evidence="2">
    <location>
        <position position="124"/>
    </location>
    <ligand>
        <name>Mn(2+)</name>
        <dbReference type="ChEBI" id="CHEBI:29035"/>
        <label>2</label>
    </ligand>
</feature>
<feature type="binding site" evidence="2">
    <location>
        <position position="250"/>
    </location>
    <ligand>
        <name>Mn(2+)</name>
        <dbReference type="ChEBI" id="CHEBI:29035"/>
        <label>2</label>
    </ligand>
</feature>
<feature type="binding site" evidence="2">
    <location>
        <position position="252"/>
    </location>
    <ligand>
        <name>Mn(2+)</name>
        <dbReference type="ChEBI" id="CHEBI:29035"/>
        <label>1</label>
    </ligand>
</feature>
<name>MRE11_ARATH</name>
<reference key="1">
    <citation type="online journal article" date="1999" name="Plant Gene Register">
        <title>Isolation of the complete cDNA of the Mre11 homologue of Arabidopsis indicates conservation of DNA recombination mechanisms between plants and other eucaryotes.</title>
        <authorList>
            <person name="Hartung F."/>
            <person name="Puchta H."/>
        </authorList>
        <locator>PGR99-132</locator>
    </citation>
    <scope>NUCLEOTIDE SEQUENCE [MRNA]</scope>
    <source>
        <strain>cv. Columbia</strain>
    </source>
</reference>
<reference key="2">
    <citation type="journal article" date="1998" name="DNA Res.">
        <title>Structural analysis of Arabidopsis thaliana chromosome 5. V. Sequence features of the regions of 1,381,565 bp covered by twenty one physically assigned P1 and TAC clones.</title>
        <authorList>
            <person name="Kaneko T."/>
            <person name="Kotani H."/>
            <person name="Nakamura Y."/>
            <person name="Sato S."/>
            <person name="Asamizu E."/>
            <person name="Miyajima N."/>
            <person name="Tabata S."/>
        </authorList>
    </citation>
    <scope>NUCLEOTIDE SEQUENCE [LARGE SCALE GENOMIC DNA]</scope>
    <source>
        <strain>cv. Columbia</strain>
    </source>
</reference>
<reference key="3">
    <citation type="journal article" date="2017" name="Plant J.">
        <title>Araport11: a complete reannotation of the Arabidopsis thaliana reference genome.</title>
        <authorList>
            <person name="Cheng C.Y."/>
            <person name="Krishnakumar V."/>
            <person name="Chan A.P."/>
            <person name="Thibaud-Nissen F."/>
            <person name="Schobel S."/>
            <person name="Town C.D."/>
        </authorList>
    </citation>
    <scope>GENOME REANNOTATION</scope>
    <source>
        <strain>cv. Columbia</strain>
    </source>
</reference>
<reference key="4">
    <citation type="journal article" date="2006" name="DNA Repair">
        <title>Recent advances in understanding of the DNA double-strand break repair machinery of plants.</title>
        <authorList>
            <person name="Bleuyard J.Y."/>
            <person name="Gallego M.E."/>
            <person name="White C.I."/>
        </authorList>
    </citation>
    <scope>REVIEW ON DNA REPAIR</scope>
</reference>
<reference key="5">
    <citation type="journal article" date="2007" name="Plant J.">
        <title>NBS1 is involved in DNA repair and plays a synergistic role with ATM in mediating meiotic homologous recombination in plants.</title>
        <authorList>
            <person name="Waterworth W.M."/>
            <person name="Altun C."/>
            <person name="Armstrong S.J."/>
            <person name="Roberts N."/>
            <person name="Dean P.J."/>
            <person name="Young K."/>
            <person name="Weil C.F."/>
            <person name="Bray C.M."/>
            <person name="West C.E."/>
        </authorList>
    </citation>
    <scope>INTERACTION WITH MRE11 AND RAD50</scope>
    <source>
        <strain>cv. Columbia</strain>
    </source>
</reference>
<evidence type="ECO:0000250" key="1">
    <source>
        <dbReference type="UniProtKB" id="P49959"/>
    </source>
</evidence>
<evidence type="ECO:0000250" key="2">
    <source>
        <dbReference type="UniProtKB" id="Q8U1N9"/>
    </source>
</evidence>
<evidence type="ECO:0000256" key="3">
    <source>
        <dbReference type="SAM" id="MobiDB-lite"/>
    </source>
</evidence>
<evidence type="ECO:0000305" key="4"/>
<evidence type="ECO:0000305" key="5">
    <source>
    </source>
</evidence>
<evidence type="ECO:0000312" key="6">
    <source>
        <dbReference type="Araport" id="AT5G54260"/>
    </source>
</evidence>
<evidence type="ECO:0000312" key="7">
    <source>
        <dbReference type="EMBL" id="BAB10749.1"/>
    </source>
</evidence>
<proteinExistence type="evidence at protein level"/>
<organism>
    <name type="scientific">Arabidopsis thaliana</name>
    <name type="common">Mouse-ear cress</name>
    <dbReference type="NCBI Taxonomy" id="3702"/>
    <lineage>
        <taxon>Eukaryota</taxon>
        <taxon>Viridiplantae</taxon>
        <taxon>Streptophyta</taxon>
        <taxon>Embryophyta</taxon>
        <taxon>Tracheophyta</taxon>
        <taxon>Spermatophyta</taxon>
        <taxon>Magnoliopsida</taxon>
        <taxon>eudicotyledons</taxon>
        <taxon>Gunneridae</taxon>
        <taxon>Pentapetalae</taxon>
        <taxon>rosids</taxon>
        <taxon>malvids</taxon>
        <taxon>Brassicales</taxon>
        <taxon>Brassicaceae</taxon>
        <taxon>Camelineae</taxon>
        <taxon>Arabidopsis</taxon>
    </lineage>
</organism>
<sequence length="720" mass="80291">MSREDFSDTLRVLVATDCHLGYMEKDEIRRHDSFKAFEEICSIAEEKQVDFLLLGGDLFHENKPSRTTLVKAIEILRRHCLNDKPVQFQVVSDQTVNFQNAFGQVNYEDPHFNVGLPVFSIHGNHDDPAGVDNLSAIDILSACNLVNYFGKMVLGGSGVGQITLYPILMKKGSTTVALYGLGNIRDERLNRMFQTPHAVQWMRPEVQEGCDVSDWFNILVLHQNRVKSNPKNAISEHFLPRFLDFIVWGHEHECLIDPQEVSGMGFHITQPGSSVATSLIDGESKPKHVLLLEIKGNQYRPTKIPLTSVRPFEYTEIVLKDESDIDPNDQNSILEHLDKVVRNLIEKASKKAVNRSEIKLPLVRIKVDYSGFMTINPQRFGQKYVGKVANPQDILIFSKASKKGRSEANIDDSERLRPEELNQQNIEALVAESNLKMEILPVNDLDVALHNFVNKDDKLAFYSCVQYNLQETRGKLAKDSDAKKFEEDDLILKVGECLEERLKDRSTRPTGSSQFLSTGLTSENLTKGSSGIANASFSDDEDTTQMSGLAPPTRGRRGSSTANTTRGRAKAPTRGRGRGKASSAMKQTTLDSSLGFRQSQRSASAAASAAFKSASTIGEDDVDSPSSEEVEPEDFNKPDSSSEDDESTKGKGRKRPATTKRGRGRGSGTSKRGRKNESSSSLNRLLSSKDDDEDEDDEDREKKLNKSQPRVTRNYGALRR</sequence>
<comment type="function">
    <text evidence="1">Core component of the MRN complex, which plays a central role in double-strand break (DSB) repair, DNA recombination, maintenance of telomere integrity and meiosis. The MRN complex is involved in the repair of DNA double-strand breaks (DSBs) via homologous recombination (HR), an error-free mechanism which primarily occurs during S and G2 phases. The complex (1) mediates the end resection of damaged DNA, which generates proper single-stranded DNA, a key initial steps in HR, and is (2) required for the recruitment of other repair factors and efficient activation of ATM and ATR upon DNA damage. Within the MRN complex, MRE11 possesses both single-strand endonuclease activity and double-strand-specific 3'-5' exonuclease activity. MRE11 first endonucleolytically cleaves the 5' strand at DNA DSB ends to prevent non-homologous end joining (NHEJ) and licence HR. It then generates a single-stranded DNA gap via 3' to 5' exonucleolytic degradation, which is required for single-strand invasion and recombination.</text>
</comment>
<comment type="cofactor">
    <cofactor evidence="2">
        <name>Mn(2+)</name>
        <dbReference type="ChEBI" id="CHEBI:29035"/>
    </cofactor>
    <text evidence="2">Binds 2 manganese ions per subunit.</text>
</comment>
<comment type="subunit">
    <text evidence="5">Component of the MRN complex composed of two heterodimers RAD50/MRE11 associated with a single NBS1.</text>
</comment>
<comment type="subcellular location">
    <subcellularLocation>
        <location evidence="1">Nucleus</location>
    </subcellularLocation>
    <subcellularLocation>
        <location evidence="1">Chromosome</location>
    </subcellularLocation>
    <text evidence="1">Localizes to DNA double-strand breaks (DSBs).</text>
</comment>
<comment type="similarity">
    <text evidence="4">Belongs to the MRE11/RAD32 family.</text>
</comment>
<accession>Q9XGM2</accession>
<gene>
    <name type="primary">MRE11</name>
    <name evidence="6" type="ordered locus">At5g54260</name>
    <name evidence="7" type="ORF">MDK4.8</name>
</gene>